<accession>Q1J9E6</accession>
<keyword id="KW-0687">Ribonucleoprotein</keyword>
<keyword id="KW-0689">Ribosomal protein</keyword>
<proteinExistence type="inferred from homology"/>
<gene>
    <name evidence="1" type="primary">rpsB</name>
    <name type="ordered locus">MGAS2096_Spy1813</name>
</gene>
<reference key="1">
    <citation type="journal article" date="2006" name="Proc. Natl. Acad. Sci. U.S.A.">
        <title>Molecular genetic anatomy of inter- and intraserotype variation in the human bacterial pathogen group A Streptococcus.</title>
        <authorList>
            <person name="Beres S.B."/>
            <person name="Richter E.W."/>
            <person name="Nagiec M.J."/>
            <person name="Sumby P."/>
            <person name="Porcella S.F."/>
            <person name="DeLeo F.R."/>
            <person name="Musser J.M."/>
        </authorList>
    </citation>
    <scope>NUCLEOTIDE SEQUENCE [LARGE SCALE GENOMIC DNA]</scope>
    <source>
        <strain>MGAS2096</strain>
    </source>
</reference>
<protein>
    <recommendedName>
        <fullName evidence="1">Small ribosomal subunit protein uS2</fullName>
    </recommendedName>
    <alternativeName>
        <fullName evidence="2">30S ribosomal protein S2</fullName>
    </alternativeName>
</protein>
<evidence type="ECO:0000255" key="1">
    <source>
        <dbReference type="HAMAP-Rule" id="MF_00291"/>
    </source>
</evidence>
<evidence type="ECO:0000305" key="2"/>
<comment type="similarity">
    <text evidence="1">Belongs to the universal ribosomal protein uS2 family.</text>
</comment>
<feature type="chain" id="PRO_1000004087" description="Small ribosomal subunit protein uS2">
    <location>
        <begin position="1"/>
        <end position="255"/>
    </location>
</feature>
<organism>
    <name type="scientific">Streptococcus pyogenes serotype M12 (strain MGAS2096)</name>
    <dbReference type="NCBI Taxonomy" id="370553"/>
    <lineage>
        <taxon>Bacteria</taxon>
        <taxon>Bacillati</taxon>
        <taxon>Bacillota</taxon>
        <taxon>Bacilli</taxon>
        <taxon>Lactobacillales</taxon>
        <taxon>Streptococcaceae</taxon>
        <taxon>Streptococcus</taxon>
    </lineage>
</organism>
<name>RS2_STRPB</name>
<dbReference type="EMBL" id="CP000261">
    <property type="protein sequence ID" value="ABF36865.1"/>
    <property type="molecule type" value="Genomic_DNA"/>
</dbReference>
<dbReference type="SMR" id="Q1J9E6"/>
<dbReference type="KEGG" id="spj:MGAS2096_Spy1813"/>
<dbReference type="HOGENOM" id="CLU_040318_1_2_9"/>
<dbReference type="GO" id="GO:0022627">
    <property type="term" value="C:cytosolic small ribosomal subunit"/>
    <property type="evidence" value="ECO:0007669"/>
    <property type="project" value="TreeGrafter"/>
</dbReference>
<dbReference type="GO" id="GO:0003735">
    <property type="term" value="F:structural constituent of ribosome"/>
    <property type="evidence" value="ECO:0007669"/>
    <property type="project" value="InterPro"/>
</dbReference>
<dbReference type="GO" id="GO:0006412">
    <property type="term" value="P:translation"/>
    <property type="evidence" value="ECO:0007669"/>
    <property type="project" value="UniProtKB-UniRule"/>
</dbReference>
<dbReference type="CDD" id="cd01425">
    <property type="entry name" value="RPS2"/>
    <property type="match status" value="1"/>
</dbReference>
<dbReference type="FunFam" id="1.10.287.610:FF:000001">
    <property type="entry name" value="30S ribosomal protein S2"/>
    <property type="match status" value="1"/>
</dbReference>
<dbReference type="Gene3D" id="3.40.50.10490">
    <property type="entry name" value="Glucose-6-phosphate isomerase like protein, domain 1"/>
    <property type="match status" value="1"/>
</dbReference>
<dbReference type="Gene3D" id="1.10.287.610">
    <property type="entry name" value="Helix hairpin bin"/>
    <property type="match status" value="1"/>
</dbReference>
<dbReference type="HAMAP" id="MF_00291_B">
    <property type="entry name" value="Ribosomal_uS2_B"/>
    <property type="match status" value="1"/>
</dbReference>
<dbReference type="InterPro" id="IPR001865">
    <property type="entry name" value="Ribosomal_uS2"/>
</dbReference>
<dbReference type="InterPro" id="IPR005706">
    <property type="entry name" value="Ribosomal_uS2_bac/mit/plastid"/>
</dbReference>
<dbReference type="InterPro" id="IPR018130">
    <property type="entry name" value="Ribosomal_uS2_CS"/>
</dbReference>
<dbReference type="InterPro" id="IPR023591">
    <property type="entry name" value="Ribosomal_uS2_flav_dom_sf"/>
</dbReference>
<dbReference type="NCBIfam" id="TIGR01011">
    <property type="entry name" value="rpsB_bact"/>
    <property type="match status" value="1"/>
</dbReference>
<dbReference type="PANTHER" id="PTHR12534">
    <property type="entry name" value="30S RIBOSOMAL PROTEIN S2 PROKARYOTIC AND ORGANELLAR"/>
    <property type="match status" value="1"/>
</dbReference>
<dbReference type="PANTHER" id="PTHR12534:SF0">
    <property type="entry name" value="SMALL RIBOSOMAL SUBUNIT PROTEIN US2M"/>
    <property type="match status" value="1"/>
</dbReference>
<dbReference type="Pfam" id="PF00318">
    <property type="entry name" value="Ribosomal_S2"/>
    <property type="match status" value="1"/>
</dbReference>
<dbReference type="PRINTS" id="PR00395">
    <property type="entry name" value="RIBOSOMALS2"/>
</dbReference>
<dbReference type="SUPFAM" id="SSF52313">
    <property type="entry name" value="Ribosomal protein S2"/>
    <property type="match status" value="1"/>
</dbReference>
<dbReference type="PROSITE" id="PS00962">
    <property type="entry name" value="RIBOSOMAL_S2_1"/>
    <property type="match status" value="1"/>
</dbReference>
<sequence length="255" mass="28400">MAVISMKQLLEAGVHFGHQTRRWNPKMAKYIFTERNGIHVIDLQQTVKLADQAYEFVRDAAANDAVILFVGTKKQAAEAVADEATRAGQYFINHRWLGGTLTNWGTIQKRIARLKEIKRMEEEGTFDVLPKKEVALLNKQRARLEKFLGGIEDMPRIPDVMYVVDPHKEQIAVKEAKKLGIPVVAMVDTNADPDDIDIIIPANDDAIRAVKLITAKLADAIIEGRQGEDADVAFEADTQADSIEEIVEVVEGDNA</sequence>